<reference key="1">
    <citation type="journal article" date="2007" name="Nat. Biotechnol.">
        <title>Genome sequencing and analysis of the versatile cell factory Aspergillus niger CBS 513.88.</title>
        <authorList>
            <person name="Pel H.J."/>
            <person name="de Winde J.H."/>
            <person name="Archer D.B."/>
            <person name="Dyer P.S."/>
            <person name="Hofmann G."/>
            <person name="Schaap P.J."/>
            <person name="Turner G."/>
            <person name="de Vries R.P."/>
            <person name="Albang R."/>
            <person name="Albermann K."/>
            <person name="Andersen M.R."/>
            <person name="Bendtsen J.D."/>
            <person name="Benen J.A.E."/>
            <person name="van den Berg M."/>
            <person name="Breestraat S."/>
            <person name="Caddick M.X."/>
            <person name="Contreras R."/>
            <person name="Cornell M."/>
            <person name="Coutinho P.M."/>
            <person name="Danchin E.G.J."/>
            <person name="Debets A.J.M."/>
            <person name="Dekker P."/>
            <person name="van Dijck P.W.M."/>
            <person name="van Dijk A."/>
            <person name="Dijkhuizen L."/>
            <person name="Driessen A.J.M."/>
            <person name="d'Enfert C."/>
            <person name="Geysens S."/>
            <person name="Goosen C."/>
            <person name="Groot G.S.P."/>
            <person name="de Groot P.W.J."/>
            <person name="Guillemette T."/>
            <person name="Henrissat B."/>
            <person name="Herweijer M."/>
            <person name="van den Hombergh J.P.T.W."/>
            <person name="van den Hondel C.A.M.J.J."/>
            <person name="van der Heijden R.T.J.M."/>
            <person name="van der Kaaij R.M."/>
            <person name="Klis F.M."/>
            <person name="Kools H.J."/>
            <person name="Kubicek C.P."/>
            <person name="van Kuyk P.A."/>
            <person name="Lauber J."/>
            <person name="Lu X."/>
            <person name="van der Maarel M.J.E.C."/>
            <person name="Meulenberg R."/>
            <person name="Menke H."/>
            <person name="Mortimer M.A."/>
            <person name="Nielsen J."/>
            <person name="Oliver S.G."/>
            <person name="Olsthoorn M."/>
            <person name="Pal K."/>
            <person name="van Peij N.N.M.E."/>
            <person name="Ram A.F.J."/>
            <person name="Rinas U."/>
            <person name="Roubos J.A."/>
            <person name="Sagt C.M.J."/>
            <person name="Schmoll M."/>
            <person name="Sun J."/>
            <person name="Ussery D."/>
            <person name="Varga J."/>
            <person name="Vervecken W."/>
            <person name="van de Vondervoort P.J.J."/>
            <person name="Wedler H."/>
            <person name="Woesten H.A.B."/>
            <person name="Zeng A.-P."/>
            <person name="van Ooyen A.J.J."/>
            <person name="Visser J."/>
            <person name="Stam H."/>
        </authorList>
    </citation>
    <scope>NUCLEOTIDE SEQUENCE [LARGE SCALE GENOMIC DNA]</scope>
    <source>
        <strain>ATCC MYA-4892 / CBS 513.88 / FGSC A1513</strain>
    </source>
</reference>
<name>MOCOS_ASPNC</name>
<comment type="function">
    <text evidence="2">Sulfurates the molybdenum cofactor. Sulfation of molybdenum is essential for xanthine dehydrogenase (XDH) and aldehyde oxidase (ADO) enzymes in which molybdenum cofactor is liganded by 1 oxygen and 1 sulfur atom in active form.</text>
</comment>
<comment type="catalytic activity">
    <reaction evidence="2">
        <text>Mo-molybdopterin + L-cysteine + AH2 = thio-Mo-molybdopterin + L-alanine + A + H2O</text>
        <dbReference type="Rhea" id="RHEA:42636"/>
        <dbReference type="ChEBI" id="CHEBI:13193"/>
        <dbReference type="ChEBI" id="CHEBI:15377"/>
        <dbReference type="ChEBI" id="CHEBI:17499"/>
        <dbReference type="ChEBI" id="CHEBI:35235"/>
        <dbReference type="ChEBI" id="CHEBI:57972"/>
        <dbReference type="ChEBI" id="CHEBI:71302"/>
        <dbReference type="ChEBI" id="CHEBI:82685"/>
        <dbReference type="EC" id="2.8.1.9"/>
    </reaction>
</comment>
<comment type="cofactor">
    <cofactor evidence="2">
        <name>pyridoxal 5'-phosphate</name>
        <dbReference type="ChEBI" id="CHEBI:597326"/>
    </cofactor>
</comment>
<comment type="pathway">
    <text evidence="1">Cofactor biosynthesis; molybdopterin biosynthesis.</text>
</comment>
<comment type="similarity">
    <text evidence="2">Belongs to the class-V pyridoxal-phosphate-dependent aminotransferase family. MOCOS subfamily.</text>
</comment>
<proteinExistence type="inferred from homology"/>
<keyword id="KW-0501">Molybdenum cofactor biosynthesis</keyword>
<keyword id="KW-0663">Pyridoxal phosphate</keyword>
<keyword id="KW-1185">Reference proteome</keyword>
<keyword id="KW-0808">Transferase</keyword>
<evidence type="ECO:0000250" key="1">
    <source>
        <dbReference type="UniProtKB" id="Q96EN8"/>
    </source>
</evidence>
<evidence type="ECO:0000255" key="2">
    <source>
        <dbReference type="HAMAP-Rule" id="MF_03050"/>
    </source>
</evidence>
<evidence type="ECO:0000256" key="3">
    <source>
        <dbReference type="SAM" id="MobiDB-lite"/>
    </source>
</evidence>
<dbReference type="EC" id="2.8.1.9" evidence="2"/>
<dbReference type="EMBL" id="AM270075">
    <property type="protein sequence ID" value="CAK38653.1"/>
    <property type="molecule type" value="Genomic_DNA"/>
</dbReference>
<dbReference type="RefSeq" id="XP_001401755.1">
    <property type="nucleotide sequence ID" value="XM_001401718.2"/>
</dbReference>
<dbReference type="SMR" id="A2QIK9"/>
<dbReference type="EnsemblFungi" id="CAK38653">
    <property type="protein sequence ID" value="CAK38653"/>
    <property type="gene ID" value="An04g03890"/>
</dbReference>
<dbReference type="GeneID" id="4990795"/>
<dbReference type="KEGG" id="ang:An04g03890"/>
<dbReference type="VEuPathDB" id="FungiDB:An04g03890"/>
<dbReference type="HOGENOM" id="CLU_010913_0_0_1"/>
<dbReference type="UniPathway" id="UPA00344"/>
<dbReference type="Proteomes" id="UP000006706">
    <property type="component" value="Chromosome 6L"/>
</dbReference>
<dbReference type="GO" id="GO:0016829">
    <property type="term" value="F:lyase activity"/>
    <property type="evidence" value="ECO:0007669"/>
    <property type="project" value="UniProtKB-UniRule"/>
</dbReference>
<dbReference type="GO" id="GO:0008265">
    <property type="term" value="F:molybdenum cofactor sulfurtransferase activity"/>
    <property type="evidence" value="ECO:0007669"/>
    <property type="project" value="UniProtKB-UniRule"/>
</dbReference>
<dbReference type="GO" id="GO:0030151">
    <property type="term" value="F:molybdenum ion binding"/>
    <property type="evidence" value="ECO:0007669"/>
    <property type="project" value="UniProtKB-UniRule"/>
</dbReference>
<dbReference type="GO" id="GO:0030170">
    <property type="term" value="F:pyridoxal phosphate binding"/>
    <property type="evidence" value="ECO:0007669"/>
    <property type="project" value="UniProtKB-UniRule"/>
</dbReference>
<dbReference type="GO" id="GO:0006777">
    <property type="term" value="P:Mo-molybdopterin cofactor biosynthetic process"/>
    <property type="evidence" value="ECO:0007669"/>
    <property type="project" value="UniProtKB-UniRule"/>
</dbReference>
<dbReference type="Gene3D" id="3.40.640.10">
    <property type="entry name" value="Type I PLP-dependent aspartate aminotransferase-like (Major domain)"/>
    <property type="match status" value="1"/>
</dbReference>
<dbReference type="HAMAP" id="MF_03050">
    <property type="entry name" value="MOCOS"/>
    <property type="match status" value="1"/>
</dbReference>
<dbReference type="InterPro" id="IPR000192">
    <property type="entry name" value="Aminotrans_V_dom"/>
</dbReference>
<dbReference type="InterPro" id="IPR005302">
    <property type="entry name" value="MoCF_Sase_C"/>
</dbReference>
<dbReference type="InterPro" id="IPR028886">
    <property type="entry name" value="MoCo_sulfurase"/>
</dbReference>
<dbReference type="InterPro" id="IPR005303">
    <property type="entry name" value="MOCOS_middle"/>
</dbReference>
<dbReference type="InterPro" id="IPR015424">
    <property type="entry name" value="PyrdxlP-dep_Trfase"/>
</dbReference>
<dbReference type="InterPro" id="IPR015421">
    <property type="entry name" value="PyrdxlP-dep_Trfase_major"/>
</dbReference>
<dbReference type="PANTHER" id="PTHR14237:SF19">
    <property type="entry name" value="MITOCHONDRIAL AMIDOXIME REDUCING COMPONENT 1"/>
    <property type="match status" value="1"/>
</dbReference>
<dbReference type="PANTHER" id="PTHR14237">
    <property type="entry name" value="MOLYBDOPTERIN COFACTOR SULFURASE MOSC"/>
    <property type="match status" value="1"/>
</dbReference>
<dbReference type="Pfam" id="PF00266">
    <property type="entry name" value="Aminotran_5"/>
    <property type="match status" value="1"/>
</dbReference>
<dbReference type="Pfam" id="PF03473">
    <property type="entry name" value="MOSC"/>
    <property type="match status" value="1"/>
</dbReference>
<dbReference type="Pfam" id="PF03476">
    <property type="entry name" value="MOSC_N"/>
    <property type="match status" value="1"/>
</dbReference>
<dbReference type="SUPFAM" id="SSF141673">
    <property type="entry name" value="MOSC N-terminal domain-like"/>
    <property type="match status" value="1"/>
</dbReference>
<dbReference type="SUPFAM" id="SSF53383">
    <property type="entry name" value="PLP-dependent transferases"/>
    <property type="match status" value="1"/>
</dbReference>
<dbReference type="PROSITE" id="PS51340">
    <property type="entry name" value="MOSC"/>
    <property type="match status" value="1"/>
</dbReference>
<organism>
    <name type="scientific">Aspergillus niger (strain ATCC MYA-4892 / CBS 513.88 / FGSC A1513)</name>
    <dbReference type="NCBI Taxonomy" id="425011"/>
    <lineage>
        <taxon>Eukaryota</taxon>
        <taxon>Fungi</taxon>
        <taxon>Dikarya</taxon>
        <taxon>Ascomycota</taxon>
        <taxon>Pezizomycotina</taxon>
        <taxon>Eurotiomycetes</taxon>
        <taxon>Eurotiomycetidae</taxon>
        <taxon>Eurotiales</taxon>
        <taxon>Aspergillaceae</taxon>
        <taxon>Aspergillus</taxon>
        <taxon>Aspergillus subgen. Circumdati</taxon>
    </lineage>
</organism>
<accession>A2QIK9</accession>
<gene>
    <name evidence="2" type="primary">hxB</name>
    <name type="ORF">An04g03890</name>
</gene>
<sequence length="823" mass="90996">MSDRGKCQYPDDVDVIREREYPLLKDTTYLDHAGTTLYAKSLIESFSRDLTSNLYGNPHSMSAPSQLSTQRVDDIRLRALRFFSADPEEFDLVFVANATAAIKLVADSFRESTPQGFWYGYHVDSHTSLVGARELAGIGSRCFVTDAEVESWISQLDTEPVQGPRLFAYPAQSNMNGRRFPRGWCGRIRESAKDTYTLLDVASLVSTSPFDLSDASAAPDFAVLSFYKIFGFPDLGALIVRKSAGHIFDKRKFFGGGTVDMVLTQGTQWHAKKQSSIHERLEDGTLPFHNIIALGSAFDTHERLFGSMDNISSHTRFLAKRLYDRMTTLRHYNGESVCHVYKPSHSDYTDPSTQGPILAFNLRSSQGAWIGKSEVEKMASVRNIQIRSGTLCNPGGTAASLNWSGADMLRHFGAGMRCGDDHDIMDGRPTGILRVSLGAMSNLTDIDTFMGFIEEFYVEKSPNVCALVPPLEANLTHRSGFHVESLSVYPIKSCGAFKVPDGKRWEIRREGLVWDREWCLIHQGTGTALNQKRYPRMALIRPFIDLSHGVLRVTCGSIRSPSQKTLEIPLDRENSNLTTTSLCQNSSKPSTVCGDQVIVQAYSSPTVSAFFSDFLGVPCTLARFPPQSSTRLAEPRRGLGSRKSPLRPAMPGAFPQDTPTPEAERNPILLSNESPILLISRSSVNRLNETIKSSPTTTNSTGRKKAVAADVFRANIVVAEDFPQPVSAGRPYIEDHWESLRIGPDNLHFNVLGSCQRCQMVCVDQLTGVRGEEPYSTLAKTRKSGNKIYFGRHLAISSNGDGNSVNSRTVMVGDVVTPSYYGP</sequence>
<protein>
    <recommendedName>
        <fullName evidence="2">Molybdenum cofactor sulfurase</fullName>
        <shortName evidence="2">MCS</shortName>
        <shortName evidence="2">MOS</shortName>
        <shortName evidence="2">MoCo sulfurase</shortName>
        <ecNumber evidence="2">2.8.1.9</ecNumber>
    </recommendedName>
    <alternativeName>
        <fullName evidence="2">Molybdenum cofactor sulfurtransferase</fullName>
    </alternativeName>
</protein>
<feature type="chain" id="PRO_0000369380" description="Molybdenum cofactor sulfurase">
    <location>
        <begin position="1"/>
        <end position="823"/>
    </location>
</feature>
<feature type="domain" description="MOSC" evidence="2">
    <location>
        <begin position="644"/>
        <end position="819"/>
    </location>
</feature>
<feature type="region of interest" description="Disordered" evidence="3">
    <location>
        <begin position="628"/>
        <end position="667"/>
    </location>
</feature>
<feature type="active site" evidence="2">
    <location>
        <position position="392"/>
    </location>
</feature>
<feature type="modified residue" description="N6-(pyridoxal phosphate)lysine" evidence="2">
    <location>
        <position position="228"/>
    </location>
</feature>